<gene>
    <name evidence="1" type="primary">rplI</name>
    <name type="ordered locus">BDI_3969</name>
</gene>
<keyword id="KW-1185">Reference proteome</keyword>
<keyword id="KW-0687">Ribonucleoprotein</keyword>
<keyword id="KW-0689">Ribosomal protein</keyword>
<keyword id="KW-0694">RNA-binding</keyword>
<keyword id="KW-0699">rRNA-binding</keyword>
<accession>A6LIX9</accession>
<evidence type="ECO:0000255" key="1">
    <source>
        <dbReference type="HAMAP-Rule" id="MF_00503"/>
    </source>
</evidence>
<evidence type="ECO:0000305" key="2"/>
<organism>
    <name type="scientific">Parabacteroides distasonis (strain ATCC 8503 / DSM 20701 / CIP 104284 / JCM 5825 / NCTC 11152)</name>
    <dbReference type="NCBI Taxonomy" id="435591"/>
    <lineage>
        <taxon>Bacteria</taxon>
        <taxon>Pseudomonadati</taxon>
        <taxon>Bacteroidota</taxon>
        <taxon>Bacteroidia</taxon>
        <taxon>Bacteroidales</taxon>
        <taxon>Tannerellaceae</taxon>
        <taxon>Parabacteroides</taxon>
    </lineage>
</organism>
<proteinExistence type="inferred from homology"/>
<dbReference type="EMBL" id="CP000140">
    <property type="protein sequence ID" value="ABR45643.1"/>
    <property type="molecule type" value="Genomic_DNA"/>
</dbReference>
<dbReference type="RefSeq" id="WP_005855078.1">
    <property type="nucleotide sequence ID" value="NZ_LR215978.1"/>
</dbReference>
<dbReference type="SMR" id="A6LIX9"/>
<dbReference type="STRING" id="435591.BDI_3969"/>
<dbReference type="PaxDb" id="435591-BDI_3969"/>
<dbReference type="GeneID" id="93524144"/>
<dbReference type="KEGG" id="pdi:BDI_3969"/>
<dbReference type="eggNOG" id="COG0359">
    <property type="taxonomic scope" value="Bacteria"/>
</dbReference>
<dbReference type="HOGENOM" id="CLU_078938_3_0_10"/>
<dbReference type="BioCyc" id="PDIS435591:G1G5A-4080-MONOMER"/>
<dbReference type="Proteomes" id="UP000000566">
    <property type="component" value="Chromosome"/>
</dbReference>
<dbReference type="GO" id="GO:1990904">
    <property type="term" value="C:ribonucleoprotein complex"/>
    <property type="evidence" value="ECO:0007669"/>
    <property type="project" value="UniProtKB-KW"/>
</dbReference>
<dbReference type="GO" id="GO:0005840">
    <property type="term" value="C:ribosome"/>
    <property type="evidence" value="ECO:0007669"/>
    <property type="project" value="UniProtKB-KW"/>
</dbReference>
<dbReference type="GO" id="GO:0019843">
    <property type="term" value="F:rRNA binding"/>
    <property type="evidence" value="ECO:0007669"/>
    <property type="project" value="UniProtKB-UniRule"/>
</dbReference>
<dbReference type="GO" id="GO:0003735">
    <property type="term" value="F:structural constituent of ribosome"/>
    <property type="evidence" value="ECO:0007669"/>
    <property type="project" value="InterPro"/>
</dbReference>
<dbReference type="GO" id="GO:0006412">
    <property type="term" value="P:translation"/>
    <property type="evidence" value="ECO:0007669"/>
    <property type="project" value="UniProtKB-UniRule"/>
</dbReference>
<dbReference type="FunFam" id="3.10.430.100:FF:000006">
    <property type="entry name" value="50S ribosomal protein L9"/>
    <property type="match status" value="1"/>
</dbReference>
<dbReference type="Gene3D" id="3.10.430.100">
    <property type="entry name" value="Ribosomal protein L9, C-terminal domain"/>
    <property type="match status" value="1"/>
</dbReference>
<dbReference type="Gene3D" id="3.40.5.10">
    <property type="entry name" value="Ribosomal protein L9, N-terminal domain"/>
    <property type="match status" value="1"/>
</dbReference>
<dbReference type="HAMAP" id="MF_00503">
    <property type="entry name" value="Ribosomal_bL9"/>
    <property type="match status" value="1"/>
</dbReference>
<dbReference type="InterPro" id="IPR000244">
    <property type="entry name" value="Ribosomal_bL9"/>
</dbReference>
<dbReference type="InterPro" id="IPR009027">
    <property type="entry name" value="Ribosomal_bL9/RNase_H1_N"/>
</dbReference>
<dbReference type="InterPro" id="IPR020594">
    <property type="entry name" value="Ribosomal_bL9_bac/chp"/>
</dbReference>
<dbReference type="InterPro" id="IPR020069">
    <property type="entry name" value="Ribosomal_bL9_C"/>
</dbReference>
<dbReference type="InterPro" id="IPR036791">
    <property type="entry name" value="Ribosomal_bL9_C_sf"/>
</dbReference>
<dbReference type="InterPro" id="IPR020070">
    <property type="entry name" value="Ribosomal_bL9_N"/>
</dbReference>
<dbReference type="InterPro" id="IPR036935">
    <property type="entry name" value="Ribosomal_bL9_N_sf"/>
</dbReference>
<dbReference type="NCBIfam" id="TIGR00158">
    <property type="entry name" value="L9"/>
    <property type="match status" value="1"/>
</dbReference>
<dbReference type="PANTHER" id="PTHR21368">
    <property type="entry name" value="50S RIBOSOMAL PROTEIN L9"/>
    <property type="match status" value="1"/>
</dbReference>
<dbReference type="Pfam" id="PF03948">
    <property type="entry name" value="Ribosomal_L9_C"/>
    <property type="match status" value="1"/>
</dbReference>
<dbReference type="Pfam" id="PF01281">
    <property type="entry name" value="Ribosomal_L9_N"/>
    <property type="match status" value="1"/>
</dbReference>
<dbReference type="SUPFAM" id="SSF55658">
    <property type="entry name" value="L9 N-domain-like"/>
    <property type="match status" value="1"/>
</dbReference>
<dbReference type="SUPFAM" id="SSF55653">
    <property type="entry name" value="Ribosomal protein L9 C-domain"/>
    <property type="match status" value="1"/>
</dbReference>
<sequence>MQVILKEDVVNLGYKDDIVTVKDGYGRNFLIPTGKAVIASESAKKVLAENLKQRAHKLAKIKEDAQTLAAKLEGVALTIGAKTSSTGTIFGSVTNIQVAEALAKAGFENIDRKIIYIKESVKEVGSYKAVLKLHKEVSVEVPFEVVSE</sequence>
<feature type="chain" id="PRO_1000014825" description="Large ribosomal subunit protein bL9">
    <location>
        <begin position="1"/>
        <end position="148"/>
    </location>
</feature>
<protein>
    <recommendedName>
        <fullName evidence="1">Large ribosomal subunit protein bL9</fullName>
    </recommendedName>
    <alternativeName>
        <fullName evidence="2">50S ribosomal protein L9</fullName>
    </alternativeName>
</protein>
<name>RL9_PARD8</name>
<reference key="1">
    <citation type="journal article" date="2007" name="PLoS Biol.">
        <title>Evolution of symbiotic bacteria in the distal human intestine.</title>
        <authorList>
            <person name="Xu J."/>
            <person name="Mahowald M.A."/>
            <person name="Ley R.E."/>
            <person name="Lozupone C.A."/>
            <person name="Hamady M."/>
            <person name="Martens E.C."/>
            <person name="Henrissat B."/>
            <person name="Coutinho P.M."/>
            <person name="Minx P."/>
            <person name="Latreille P."/>
            <person name="Cordum H."/>
            <person name="Van Brunt A."/>
            <person name="Kim K."/>
            <person name="Fulton R.S."/>
            <person name="Fulton L.A."/>
            <person name="Clifton S.W."/>
            <person name="Wilson R.K."/>
            <person name="Knight R.D."/>
            <person name="Gordon J.I."/>
        </authorList>
    </citation>
    <scope>NUCLEOTIDE SEQUENCE [LARGE SCALE GENOMIC DNA]</scope>
    <source>
        <strain>ATCC 8503 / DSM 20701 / CIP 104284 / JCM 5825 / NCTC 11152</strain>
    </source>
</reference>
<comment type="function">
    <text evidence="1">Binds to the 23S rRNA.</text>
</comment>
<comment type="similarity">
    <text evidence="1">Belongs to the bacterial ribosomal protein bL9 family.</text>
</comment>